<evidence type="ECO:0000255" key="1"/>
<evidence type="ECO:0000255" key="2">
    <source>
        <dbReference type="HAMAP-Rule" id="MF_01036"/>
    </source>
</evidence>
<reference key="1">
    <citation type="journal article" date="2003" name="Lancet">
        <title>Genome sequence of Vibrio parahaemolyticus: a pathogenic mechanism distinct from that of V. cholerae.</title>
        <authorList>
            <person name="Makino K."/>
            <person name="Oshima K."/>
            <person name="Kurokawa K."/>
            <person name="Yokoyama K."/>
            <person name="Uda T."/>
            <person name="Tagomori K."/>
            <person name="Iijima Y."/>
            <person name="Najima M."/>
            <person name="Nakano M."/>
            <person name="Yamashita A."/>
            <person name="Kubota Y."/>
            <person name="Kimura S."/>
            <person name="Yasunaga T."/>
            <person name="Honda T."/>
            <person name="Shinagawa H."/>
            <person name="Hattori M."/>
            <person name="Iida T."/>
        </authorList>
    </citation>
    <scope>NUCLEOTIDE SEQUENCE [LARGE SCALE GENOMIC DNA]</scope>
    <source>
        <strain>RIMD 2210633</strain>
    </source>
</reference>
<gene>
    <name evidence="2" type="primary">rnb</name>
    <name type="ordered locus">VPA0607</name>
</gene>
<keyword id="KW-0963">Cytoplasm</keyword>
<keyword id="KW-0269">Exonuclease</keyword>
<keyword id="KW-0378">Hydrolase</keyword>
<keyword id="KW-0540">Nuclease</keyword>
<keyword id="KW-0694">RNA-binding</keyword>
<feature type="chain" id="PRO_0000166391" description="Exoribonuclease 2">
    <location>
        <begin position="1"/>
        <end position="668"/>
    </location>
</feature>
<feature type="domain" description="RNB" evidence="1">
    <location>
        <begin position="193"/>
        <end position="521"/>
    </location>
</feature>
<feature type="domain" description="S1 motif" evidence="2">
    <location>
        <begin position="568"/>
        <end position="650"/>
    </location>
</feature>
<sequence length="668" mass="75438">MFQDNPLLAQLKQQIQENLPKKEGSIKATDKGFGFLEVDSKTSFFIPPAYMKKCIHGDKVVAIIRTENEREVAEPQELIEQSLTRFIGRVKMFKGKLNVVPDHPQLKKLSLKAKLKKGLKPDNFAEGDWVVAHLVRHPLKGDNTFFVEISEKITDADDKIAPWWVTLAQNDLPNSEPAGIENWELKDDADLERIEMTHVPFVTIDGESTKDMDDALYAKKTESGDFELTIAIADPTAYITPEDEMDKVARERGYTIYLPGRNIPMLPRDLADNLCSLIEGEIRPAICCTVTVSKDGVIGDDIKFFAANIKSHARLAYDHVSDWLENGNSDAWQPSEEIATIVRDLYEFSLARAEWREKNAVVFPDRPDYRFELSEDNDVIAIHADMRRSANRLVEESMITANICAGRTLREKFETGVFNTHAGLKPEKIEEVVQLVNPEGTLEFTAESIATLEGFAALRRWLAVQETSYLDNRIRKFQAYSEVGNQPLPHYAMGLDIYATWTSPIRKYGDMINHRMLKAVILDKEPVQKPDDQVGEELALHRKHHKIAERNVSDWLYARTLADEPSKQTCFTGEIFDINRAGARVRLLENGAAAFIPGALILDNKERIECNGDNGTISIDKEVVYKLGDTLEIVLADVNQENRSLVAKPTQVFADQPAPQTEQTVSEE</sequence>
<comment type="function">
    <text evidence="2">Involved in mRNA degradation. Hydrolyzes single-stranded polyribonucleotides processively in the 3' to 5' direction.</text>
</comment>
<comment type="catalytic activity">
    <reaction evidence="2">
        <text>Exonucleolytic cleavage in the 3'- to 5'-direction to yield nucleoside 5'-phosphates.</text>
        <dbReference type="EC" id="3.1.13.1"/>
    </reaction>
</comment>
<comment type="subcellular location">
    <subcellularLocation>
        <location evidence="2">Cytoplasm</location>
    </subcellularLocation>
</comment>
<comment type="similarity">
    <text evidence="2">Belongs to the RNR ribonuclease family. RNase II subfamily.</text>
</comment>
<protein>
    <recommendedName>
        <fullName evidence="2">Exoribonuclease 2</fullName>
        <ecNumber evidence="2">3.1.13.1</ecNumber>
    </recommendedName>
    <alternativeName>
        <fullName evidence="2">Exoribonuclease II</fullName>
        <shortName evidence="2">RNase II</shortName>
        <shortName evidence="2">Ribonuclease II</shortName>
    </alternativeName>
</protein>
<organism>
    <name type="scientific">Vibrio parahaemolyticus serotype O3:K6 (strain RIMD 2210633)</name>
    <dbReference type="NCBI Taxonomy" id="223926"/>
    <lineage>
        <taxon>Bacteria</taxon>
        <taxon>Pseudomonadati</taxon>
        <taxon>Pseudomonadota</taxon>
        <taxon>Gammaproteobacteria</taxon>
        <taxon>Vibrionales</taxon>
        <taxon>Vibrionaceae</taxon>
        <taxon>Vibrio</taxon>
    </lineage>
</organism>
<name>RNB_VIBPA</name>
<dbReference type="EC" id="3.1.13.1" evidence="2"/>
<dbReference type="EMBL" id="BA000032">
    <property type="protein sequence ID" value="BAC61950.1"/>
    <property type="molecule type" value="Genomic_DNA"/>
</dbReference>
<dbReference type="RefSeq" id="NP_800117.1">
    <property type="nucleotide sequence ID" value="NC_004605.1"/>
</dbReference>
<dbReference type="RefSeq" id="WP_005489296.1">
    <property type="nucleotide sequence ID" value="NC_004605.1"/>
</dbReference>
<dbReference type="SMR" id="Q87IJ9"/>
<dbReference type="GeneID" id="1191296"/>
<dbReference type="KEGG" id="vpa:VPA0607"/>
<dbReference type="PATRIC" id="fig|223926.6.peg.3547"/>
<dbReference type="eggNOG" id="COG4776">
    <property type="taxonomic scope" value="Bacteria"/>
</dbReference>
<dbReference type="HOGENOM" id="CLU_002333_7_3_6"/>
<dbReference type="Proteomes" id="UP000002493">
    <property type="component" value="Chromosome 2"/>
</dbReference>
<dbReference type="GO" id="GO:0005829">
    <property type="term" value="C:cytosol"/>
    <property type="evidence" value="ECO:0007669"/>
    <property type="project" value="TreeGrafter"/>
</dbReference>
<dbReference type="GO" id="GO:0008859">
    <property type="term" value="F:exoribonuclease II activity"/>
    <property type="evidence" value="ECO:0007669"/>
    <property type="project" value="UniProtKB-UniRule"/>
</dbReference>
<dbReference type="GO" id="GO:0003723">
    <property type="term" value="F:RNA binding"/>
    <property type="evidence" value="ECO:0007669"/>
    <property type="project" value="UniProtKB-KW"/>
</dbReference>
<dbReference type="GO" id="GO:0006402">
    <property type="term" value="P:mRNA catabolic process"/>
    <property type="evidence" value="ECO:0007669"/>
    <property type="project" value="UniProtKB-UniRule"/>
</dbReference>
<dbReference type="Gene3D" id="2.40.50.640">
    <property type="match status" value="1"/>
</dbReference>
<dbReference type="Gene3D" id="2.40.50.140">
    <property type="entry name" value="Nucleic acid-binding proteins"/>
    <property type="match status" value="2"/>
</dbReference>
<dbReference type="HAMAP" id="MF_01036">
    <property type="entry name" value="RNase_II"/>
    <property type="match status" value="1"/>
</dbReference>
<dbReference type="InterPro" id="IPR011129">
    <property type="entry name" value="CSD"/>
</dbReference>
<dbReference type="InterPro" id="IPR012340">
    <property type="entry name" value="NA-bd_OB-fold"/>
</dbReference>
<dbReference type="InterPro" id="IPR013223">
    <property type="entry name" value="RNase_B_OB_dom"/>
</dbReference>
<dbReference type="InterPro" id="IPR011804">
    <property type="entry name" value="RNase_II"/>
</dbReference>
<dbReference type="InterPro" id="IPR001900">
    <property type="entry name" value="RNase_II/R"/>
</dbReference>
<dbReference type="InterPro" id="IPR022966">
    <property type="entry name" value="RNase_II/R_CS"/>
</dbReference>
<dbReference type="InterPro" id="IPR004476">
    <property type="entry name" value="RNase_II/RNase_R"/>
</dbReference>
<dbReference type="InterPro" id="IPR050180">
    <property type="entry name" value="RNR_Ribonuclease"/>
</dbReference>
<dbReference type="InterPro" id="IPR003029">
    <property type="entry name" value="S1_domain"/>
</dbReference>
<dbReference type="NCBIfam" id="TIGR00358">
    <property type="entry name" value="3_prime_RNase"/>
    <property type="match status" value="1"/>
</dbReference>
<dbReference type="NCBIfam" id="NF003455">
    <property type="entry name" value="PRK05054.1"/>
    <property type="match status" value="1"/>
</dbReference>
<dbReference type="NCBIfam" id="TIGR02062">
    <property type="entry name" value="RNase_B"/>
    <property type="match status" value="1"/>
</dbReference>
<dbReference type="PANTHER" id="PTHR23355:SF37">
    <property type="entry name" value="EXORIBONUCLEASE 2"/>
    <property type="match status" value="1"/>
</dbReference>
<dbReference type="PANTHER" id="PTHR23355">
    <property type="entry name" value="RIBONUCLEASE"/>
    <property type="match status" value="1"/>
</dbReference>
<dbReference type="Pfam" id="PF08206">
    <property type="entry name" value="OB_RNB"/>
    <property type="match status" value="1"/>
</dbReference>
<dbReference type="Pfam" id="PF00773">
    <property type="entry name" value="RNB"/>
    <property type="match status" value="1"/>
</dbReference>
<dbReference type="Pfam" id="PF00575">
    <property type="entry name" value="S1"/>
    <property type="match status" value="1"/>
</dbReference>
<dbReference type="SMART" id="SM00357">
    <property type="entry name" value="CSP"/>
    <property type="match status" value="1"/>
</dbReference>
<dbReference type="SMART" id="SM00955">
    <property type="entry name" value="RNB"/>
    <property type="match status" value="1"/>
</dbReference>
<dbReference type="SUPFAM" id="SSF50249">
    <property type="entry name" value="Nucleic acid-binding proteins"/>
    <property type="match status" value="4"/>
</dbReference>
<dbReference type="PROSITE" id="PS01175">
    <property type="entry name" value="RIBONUCLEASE_II"/>
    <property type="match status" value="1"/>
</dbReference>
<dbReference type="PROSITE" id="PS50126">
    <property type="entry name" value="S1"/>
    <property type="match status" value="1"/>
</dbReference>
<proteinExistence type="inferred from homology"/>
<accession>Q87IJ9</accession>